<proteinExistence type="inferred from homology"/>
<feature type="chain" id="PRO_0000186586" description="PTS system lactose-specific EIICB component">
    <location>
        <begin position="1"/>
        <end position="570"/>
    </location>
</feature>
<feature type="transmembrane region" description="Helical" evidence="3">
    <location>
        <begin position="31"/>
        <end position="51"/>
    </location>
</feature>
<feature type="transmembrane region" description="Helical" evidence="3">
    <location>
        <begin position="65"/>
        <end position="85"/>
    </location>
</feature>
<feature type="transmembrane region" description="Helical" evidence="3">
    <location>
        <begin position="104"/>
        <end position="124"/>
    </location>
</feature>
<feature type="transmembrane region" description="Helical" evidence="3">
    <location>
        <begin position="133"/>
        <end position="153"/>
    </location>
</feature>
<feature type="transmembrane region" description="Helical" evidence="3">
    <location>
        <begin position="178"/>
        <end position="198"/>
    </location>
</feature>
<feature type="transmembrane region" description="Helical" evidence="3">
    <location>
        <begin position="223"/>
        <end position="243"/>
    </location>
</feature>
<feature type="transmembrane region" description="Helical" evidence="3">
    <location>
        <begin position="283"/>
        <end position="303"/>
    </location>
</feature>
<feature type="transmembrane region" description="Helical" evidence="3">
    <location>
        <begin position="340"/>
        <end position="360"/>
    </location>
</feature>
<feature type="transmembrane region" description="Helical" evidence="3">
    <location>
        <begin position="382"/>
        <end position="402"/>
    </location>
</feature>
<feature type="domain" description="PTS EIIC type-3" evidence="3">
    <location>
        <begin position="9"/>
        <end position="410"/>
    </location>
</feature>
<feature type="domain" description="PTS EIIB type-3" evidence="2">
    <location>
        <begin position="467"/>
        <end position="570"/>
    </location>
</feature>
<feature type="active site" description="Phosphocysteine intermediate; for EIIB activity" evidence="1">
    <location>
        <position position="474"/>
    </location>
</feature>
<feature type="modified residue" description="Phosphocysteine; by EIIA" evidence="1 2">
    <location>
        <position position="474"/>
    </location>
</feature>
<reference key="1">
    <citation type="journal article" date="2001" name="Lancet">
        <title>Whole genome sequencing of meticillin-resistant Staphylococcus aureus.</title>
        <authorList>
            <person name="Kuroda M."/>
            <person name="Ohta T."/>
            <person name="Uchiyama I."/>
            <person name="Baba T."/>
            <person name="Yuzawa H."/>
            <person name="Kobayashi I."/>
            <person name="Cui L."/>
            <person name="Oguchi A."/>
            <person name="Aoki K."/>
            <person name="Nagai Y."/>
            <person name="Lian J.-Q."/>
            <person name="Ito T."/>
            <person name="Kanamori M."/>
            <person name="Matsumaru H."/>
            <person name="Maruyama A."/>
            <person name="Murakami H."/>
            <person name="Hosoyama A."/>
            <person name="Mizutani-Ui Y."/>
            <person name="Takahashi N.K."/>
            <person name="Sawano T."/>
            <person name="Inoue R."/>
            <person name="Kaito C."/>
            <person name="Sekimizu K."/>
            <person name="Hirakawa H."/>
            <person name="Kuhara S."/>
            <person name="Goto S."/>
            <person name="Yabuzaki J."/>
            <person name="Kanehisa M."/>
            <person name="Yamashita A."/>
            <person name="Oshima K."/>
            <person name="Furuya K."/>
            <person name="Yoshino C."/>
            <person name="Shiba T."/>
            <person name="Hattori M."/>
            <person name="Ogasawara N."/>
            <person name="Hayashi H."/>
            <person name="Hiramatsu K."/>
        </authorList>
    </citation>
    <scope>NUCLEOTIDE SEQUENCE [LARGE SCALE GENOMIC DNA]</scope>
    <source>
        <strain>Mu50 / ATCC 700699</strain>
    </source>
</reference>
<sequence length="570" mass="62432">MMQKLIAQIEKGKPFFEKLSRNIYLRAIRDGFISAMPVILFSSIFLLIAYVPNIFGFKWDKGMEAILMKPYNYTMGLVAFLVAGTTAKSLTDSFNRKLESTNQINFISTMLAAMCGFLFLASDPAKDGGFLSAFMGTKGLLTAFLSAFVTVIVYNFCVKRNITIKMPKEVPPNISQVFKDLIPFSAVIIILYALDLVIRNSFKSNVAEGILKLFEPLFTAADGWIGVTIIFGAFALFWFVGIHGPSIVEPAIAAITYANIEANFKLLQAGEHADKIITSGTQMFIVTFGGTGATLVVPFMFMWMTKSKRNKAIGRASVVPTFFGVNEPILFGAPLVLNPVFFIPFVLAPIVNVWIFKLFVEVLGMNSFSVNLPWTTPGPLGIIMGTGFGLWSFVLAITLIVVDIIIYYPFLKVYDSEILDEEEGRKESNSDLKEKVAANFDTKKADSILAASGVSDDAAKASNITEQTNVLVLCAGGGTSGLLANALNKAAEEYHVPVKAAAGGYGAHMDIMKEYQLIILAPQVASNYEDIKQDTDRLGIKLAKTQGAEYIKLTRDGQAALDFVQQQFEN</sequence>
<evidence type="ECO:0000250" key="1">
    <source>
        <dbReference type="UniProtKB" id="P11162"/>
    </source>
</evidence>
<evidence type="ECO:0000255" key="2">
    <source>
        <dbReference type="PROSITE-ProRule" id="PRU00423"/>
    </source>
</evidence>
<evidence type="ECO:0000255" key="3">
    <source>
        <dbReference type="PROSITE-ProRule" id="PRU00428"/>
    </source>
</evidence>
<name>PTLCB_STAAM</name>
<comment type="function">
    <text evidence="1">The phosphoenolpyruvate-dependent sugar phosphotransferase system (sugar PTS), a major carbohydrate active transport system, catalyzes the phosphorylation of incoming sugar substrates concomitantly with their translocation across the cell membrane. The enzyme II LacEF PTS system is involved in lactose transport.</text>
</comment>
<comment type="catalytic activity">
    <reaction evidence="1">
        <text>lactose(out) + N(pros)-phospho-L-histidyl-[protein] = lactose 6-phosphate(in) + L-histidyl-[protein]</text>
        <dbReference type="Rhea" id="RHEA:42400"/>
        <dbReference type="Rhea" id="RHEA-COMP:9745"/>
        <dbReference type="Rhea" id="RHEA-COMP:9746"/>
        <dbReference type="ChEBI" id="CHEBI:17716"/>
        <dbReference type="ChEBI" id="CHEBI:29979"/>
        <dbReference type="ChEBI" id="CHEBI:64837"/>
        <dbReference type="ChEBI" id="CHEBI:79080"/>
        <dbReference type="EC" id="2.7.1.207"/>
    </reaction>
</comment>
<comment type="subcellular location">
    <subcellularLocation>
        <location evidence="1 3">Cell membrane</location>
        <topology evidence="1 3">Multi-pass membrane protein</topology>
    </subcellularLocation>
</comment>
<comment type="induction">
    <text evidence="1">Induced by lactose, galactose and galactose-6-P. Repressed by glucose.</text>
</comment>
<comment type="domain">
    <text evidence="3">The EIIC type-3 domain forms the PTS system translocation channel and contains the specific substrate-binding site.</text>
</comment>
<comment type="domain">
    <text evidence="2">The PTS EIIB type-3 domain is phosphorylated by phospho-EIIA on a cysteinyl residue. Then, it transfers the phosphoryl group to the sugar substrate concomitantly with the sugar uptake processed by the PTS EIIC type-3 domain.</text>
</comment>
<keyword id="KW-1003">Cell membrane</keyword>
<keyword id="KW-0418">Kinase</keyword>
<keyword id="KW-0472">Membrane</keyword>
<keyword id="KW-0597">Phosphoprotein</keyword>
<keyword id="KW-0598">Phosphotransferase system</keyword>
<keyword id="KW-0762">Sugar transport</keyword>
<keyword id="KW-0808">Transferase</keyword>
<keyword id="KW-0812">Transmembrane</keyword>
<keyword id="KW-1133">Transmembrane helix</keyword>
<keyword id="KW-0813">Transport</keyword>
<organism>
    <name type="scientific">Staphylococcus aureus (strain Mu50 / ATCC 700699)</name>
    <dbReference type="NCBI Taxonomy" id="158878"/>
    <lineage>
        <taxon>Bacteria</taxon>
        <taxon>Bacillati</taxon>
        <taxon>Bacillota</taxon>
        <taxon>Bacilli</taxon>
        <taxon>Bacillales</taxon>
        <taxon>Staphylococcaceae</taxon>
        <taxon>Staphylococcus</taxon>
    </lineage>
</organism>
<protein>
    <recommendedName>
        <fullName evidence="1">PTS system lactose-specific EIICB component</fullName>
    </recommendedName>
    <alternativeName>
        <fullName evidence="1">EIICB-Lac</fullName>
        <shortName evidence="1">EII-Lac</shortName>
    </alternativeName>
    <domain>
        <recommendedName>
            <fullName evidence="1">PTS system lactose-specific EIIC component</fullName>
        </recommendedName>
        <alternativeName>
            <fullName evidence="1">Lactose permease IIC component</fullName>
        </alternativeName>
    </domain>
    <domain>
        <recommendedName>
            <fullName evidence="1">PTS system lactose-specific EIIB component</fullName>
            <ecNumber evidence="1">2.7.1.207</ecNumber>
        </recommendedName>
        <alternativeName>
            <fullName evidence="1">Lactose-specific phosphotransferase enzyme IIB component</fullName>
        </alternativeName>
    </domain>
</protein>
<accession>Q931G6</accession>
<gene>
    <name evidence="1" type="primary">lacE</name>
    <name type="ordered locus">SAV2190</name>
</gene>
<dbReference type="EC" id="2.7.1.207" evidence="1"/>
<dbReference type="EMBL" id="BA000017">
    <property type="protein sequence ID" value="BAB58352.1"/>
    <property type="molecule type" value="Genomic_DNA"/>
</dbReference>
<dbReference type="RefSeq" id="WP_000983330.1">
    <property type="nucleotide sequence ID" value="NC_002758.2"/>
</dbReference>
<dbReference type="SMR" id="Q931G6"/>
<dbReference type="KEGG" id="sav:SAV2190"/>
<dbReference type="HOGENOM" id="CLU_029688_0_0_9"/>
<dbReference type="PhylomeDB" id="Q931G6"/>
<dbReference type="Proteomes" id="UP000002481">
    <property type="component" value="Chromosome"/>
</dbReference>
<dbReference type="GO" id="GO:0005886">
    <property type="term" value="C:plasma membrane"/>
    <property type="evidence" value="ECO:0007669"/>
    <property type="project" value="UniProtKB-SubCell"/>
</dbReference>
<dbReference type="GO" id="GO:0016301">
    <property type="term" value="F:kinase activity"/>
    <property type="evidence" value="ECO:0007669"/>
    <property type="project" value="UniProtKB-KW"/>
</dbReference>
<dbReference type="GO" id="GO:0022869">
    <property type="term" value="F:protein-N(PI)-phosphohistidine-lactose phosphotransferase system transporter activity"/>
    <property type="evidence" value="ECO:0007669"/>
    <property type="project" value="InterPro"/>
</dbReference>
<dbReference type="GO" id="GO:1901264">
    <property type="term" value="P:carbohydrate derivative transport"/>
    <property type="evidence" value="ECO:0007669"/>
    <property type="project" value="TreeGrafter"/>
</dbReference>
<dbReference type="GO" id="GO:0009401">
    <property type="term" value="P:phosphoenolpyruvate-dependent sugar phosphotransferase system"/>
    <property type="evidence" value="ECO:0007669"/>
    <property type="project" value="UniProtKB-KW"/>
</dbReference>
<dbReference type="CDD" id="cd05565">
    <property type="entry name" value="PTS_IIB_lactose"/>
    <property type="match status" value="1"/>
</dbReference>
<dbReference type="Gene3D" id="3.40.50.2300">
    <property type="match status" value="1"/>
</dbReference>
<dbReference type="InterPro" id="IPR004801">
    <property type="entry name" value="LacE"/>
</dbReference>
<dbReference type="InterPro" id="IPR036095">
    <property type="entry name" value="PTS_EIIB-like_sf"/>
</dbReference>
<dbReference type="InterPro" id="IPR003501">
    <property type="entry name" value="PTS_EIIB_2/3"/>
</dbReference>
<dbReference type="InterPro" id="IPR013012">
    <property type="entry name" value="PTS_EIIB_3"/>
</dbReference>
<dbReference type="InterPro" id="IPR003352">
    <property type="entry name" value="PTS_EIIC"/>
</dbReference>
<dbReference type="InterPro" id="IPR004501">
    <property type="entry name" value="PTS_EIIC_3"/>
</dbReference>
<dbReference type="InterPro" id="IPR041713">
    <property type="entry name" value="PTS_IIB"/>
</dbReference>
<dbReference type="InterPro" id="IPR051088">
    <property type="entry name" value="PTS_Sugar-EIIC/EIIB"/>
</dbReference>
<dbReference type="NCBIfam" id="TIGR00394">
    <property type="entry name" value="lac_pts_IIC"/>
    <property type="match status" value="1"/>
</dbReference>
<dbReference type="NCBIfam" id="TIGR00410">
    <property type="entry name" value="lacE"/>
    <property type="match status" value="1"/>
</dbReference>
<dbReference type="NCBIfam" id="TIGR00853">
    <property type="entry name" value="pts-lac"/>
    <property type="match status" value="1"/>
</dbReference>
<dbReference type="PANTHER" id="PTHR33989">
    <property type="match status" value="1"/>
</dbReference>
<dbReference type="PANTHER" id="PTHR33989:SF8">
    <property type="entry name" value="PERMEASE IIC COMPONENT"/>
    <property type="match status" value="1"/>
</dbReference>
<dbReference type="Pfam" id="PF02378">
    <property type="entry name" value="PTS_EIIC"/>
    <property type="match status" value="1"/>
</dbReference>
<dbReference type="Pfam" id="PF02302">
    <property type="entry name" value="PTS_IIB"/>
    <property type="match status" value="1"/>
</dbReference>
<dbReference type="SUPFAM" id="SSF52794">
    <property type="entry name" value="PTS system IIB component-like"/>
    <property type="match status" value="1"/>
</dbReference>
<dbReference type="PROSITE" id="PS51100">
    <property type="entry name" value="PTS_EIIB_TYPE_3"/>
    <property type="match status" value="1"/>
</dbReference>
<dbReference type="PROSITE" id="PS51105">
    <property type="entry name" value="PTS_EIIC_TYPE_3"/>
    <property type="match status" value="1"/>
</dbReference>